<organism>
    <name type="scientific">Pediococcus pentosaceus (strain ATCC 25745 / CCUG 21536 / LMG 10740 / 183-1w)</name>
    <dbReference type="NCBI Taxonomy" id="278197"/>
    <lineage>
        <taxon>Bacteria</taxon>
        <taxon>Bacillati</taxon>
        <taxon>Bacillota</taxon>
        <taxon>Bacilli</taxon>
        <taxon>Lactobacillales</taxon>
        <taxon>Lactobacillaceae</taxon>
        <taxon>Pediococcus</taxon>
    </lineage>
</organism>
<feature type="chain" id="PRO_0000303467" description="tRNA N6-adenosine threonylcarbamoyltransferase">
    <location>
        <begin position="1"/>
        <end position="345"/>
    </location>
</feature>
<feature type="binding site" evidence="1">
    <location>
        <position position="115"/>
    </location>
    <ligand>
        <name>Fe cation</name>
        <dbReference type="ChEBI" id="CHEBI:24875"/>
    </ligand>
</feature>
<feature type="binding site" evidence="1">
    <location>
        <position position="119"/>
    </location>
    <ligand>
        <name>Fe cation</name>
        <dbReference type="ChEBI" id="CHEBI:24875"/>
    </ligand>
</feature>
<feature type="binding site" evidence="1">
    <location>
        <begin position="137"/>
        <end position="141"/>
    </location>
    <ligand>
        <name>substrate</name>
    </ligand>
</feature>
<feature type="binding site" evidence="1">
    <location>
        <position position="170"/>
    </location>
    <ligand>
        <name>substrate</name>
    </ligand>
</feature>
<feature type="binding site" evidence="1">
    <location>
        <position position="183"/>
    </location>
    <ligand>
        <name>substrate</name>
    </ligand>
</feature>
<feature type="binding site" evidence="1">
    <location>
        <position position="187"/>
    </location>
    <ligand>
        <name>substrate</name>
    </ligand>
</feature>
<feature type="binding site" evidence="1">
    <location>
        <position position="276"/>
    </location>
    <ligand>
        <name>substrate</name>
    </ligand>
</feature>
<feature type="binding site" evidence="1">
    <location>
        <position position="306"/>
    </location>
    <ligand>
        <name>Fe cation</name>
        <dbReference type="ChEBI" id="CHEBI:24875"/>
    </ligand>
</feature>
<accession>Q03E69</accession>
<dbReference type="EC" id="2.3.1.234" evidence="1"/>
<dbReference type="EMBL" id="CP000422">
    <property type="protein sequence ID" value="ABJ68503.1"/>
    <property type="molecule type" value="Genomic_DNA"/>
</dbReference>
<dbReference type="RefSeq" id="WP_011673688.1">
    <property type="nucleotide sequence ID" value="NC_008525.1"/>
</dbReference>
<dbReference type="SMR" id="Q03E69"/>
<dbReference type="STRING" id="278197.PEPE_1472"/>
<dbReference type="GeneID" id="33061742"/>
<dbReference type="KEGG" id="ppe:PEPE_1472"/>
<dbReference type="eggNOG" id="COG0533">
    <property type="taxonomic scope" value="Bacteria"/>
</dbReference>
<dbReference type="HOGENOM" id="CLU_023208_0_2_9"/>
<dbReference type="OrthoDB" id="9806197at2"/>
<dbReference type="Proteomes" id="UP000000773">
    <property type="component" value="Chromosome"/>
</dbReference>
<dbReference type="GO" id="GO:0005737">
    <property type="term" value="C:cytoplasm"/>
    <property type="evidence" value="ECO:0007669"/>
    <property type="project" value="UniProtKB-SubCell"/>
</dbReference>
<dbReference type="GO" id="GO:0005506">
    <property type="term" value="F:iron ion binding"/>
    <property type="evidence" value="ECO:0007669"/>
    <property type="project" value="UniProtKB-UniRule"/>
</dbReference>
<dbReference type="GO" id="GO:0061711">
    <property type="term" value="F:N(6)-L-threonylcarbamoyladenine synthase activity"/>
    <property type="evidence" value="ECO:0007669"/>
    <property type="project" value="UniProtKB-EC"/>
</dbReference>
<dbReference type="GO" id="GO:0002949">
    <property type="term" value="P:tRNA threonylcarbamoyladenosine modification"/>
    <property type="evidence" value="ECO:0007669"/>
    <property type="project" value="UniProtKB-UniRule"/>
</dbReference>
<dbReference type="CDD" id="cd24133">
    <property type="entry name" value="ASKHA_NBD_TsaD_bac"/>
    <property type="match status" value="1"/>
</dbReference>
<dbReference type="FunFam" id="3.30.420.40:FF:000012">
    <property type="entry name" value="tRNA N6-adenosine threonylcarbamoyltransferase"/>
    <property type="match status" value="1"/>
</dbReference>
<dbReference type="FunFam" id="3.30.420.40:FF:000040">
    <property type="entry name" value="tRNA N6-adenosine threonylcarbamoyltransferase"/>
    <property type="match status" value="1"/>
</dbReference>
<dbReference type="Gene3D" id="3.30.420.40">
    <property type="match status" value="2"/>
</dbReference>
<dbReference type="HAMAP" id="MF_01445">
    <property type="entry name" value="TsaD"/>
    <property type="match status" value="1"/>
</dbReference>
<dbReference type="InterPro" id="IPR043129">
    <property type="entry name" value="ATPase_NBD"/>
</dbReference>
<dbReference type="InterPro" id="IPR000905">
    <property type="entry name" value="Gcp-like_dom"/>
</dbReference>
<dbReference type="InterPro" id="IPR017861">
    <property type="entry name" value="KAE1/TsaD"/>
</dbReference>
<dbReference type="InterPro" id="IPR022450">
    <property type="entry name" value="TsaD"/>
</dbReference>
<dbReference type="NCBIfam" id="TIGR00329">
    <property type="entry name" value="gcp_kae1"/>
    <property type="match status" value="1"/>
</dbReference>
<dbReference type="NCBIfam" id="TIGR03723">
    <property type="entry name" value="T6A_TsaD_YgjD"/>
    <property type="match status" value="1"/>
</dbReference>
<dbReference type="PANTHER" id="PTHR11735">
    <property type="entry name" value="TRNA N6-ADENOSINE THREONYLCARBAMOYLTRANSFERASE"/>
    <property type="match status" value="1"/>
</dbReference>
<dbReference type="PANTHER" id="PTHR11735:SF6">
    <property type="entry name" value="TRNA N6-ADENOSINE THREONYLCARBAMOYLTRANSFERASE, MITOCHONDRIAL"/>
    <property type="match status" value="1"/>
</dbReference>
<dbReference type="Pfam" id="PF00814">
    <property type="entry name" value="TsaD"/>
    <property type="match status" value="1"/>
</dbReference>
<dbReference type="PRINTS" id="PR00789">
    <property type="entry name" value="OSIALOPTASE"/>
</dbReference>
<dbReference type="SUPFAM" id="SSF53067">
    <property type="entry name" value="Actin-like ATPase domain"/>
    <property type="match status" value="1"/>
</dbReference>
<sequence>MDQTSLILAIESSCDETSVAVIKNGDIILSNIIATQINSHQRFGGVVPEVASRHHIEQITICIEQALKQAEVRKEDLDAVAVTYGPGLVGALLVGVSAAKAFAFANELPLIPVNHMIGHIYAARFVKPIVFPALALLVSGGHTELVYMPTENEFKIIGETRDDAAGEAYDKVGRVMGLKYPAGKAIDELAHQGEDIFKFPRAMEHEDNFDFSFSGLKSAFINTVHHADQINEELSKKDLAASFQQSVIDVITAKTVRACEQLEIKQLILAGGVAANRGLRDTLDKELGEKFNHLDFVKAPLDLCGDNGAMIGAAGEMLMRHQVFADMTLNADPSLEFDWEPEAIK</sequence>
<evidence type="ECO:0000255" key="1">
    <source>
        <dbReference type="HAMAP-Rule" id="MF_01445"/>
    </source>
</evidence>
<reference key="1">
    <citation type="journal article" date="2006" name="Proc. Natl. Acad. Sci. U.S.A.">
        <title>Comparative genomics of the lactic acid bacteria.</title>
        <authorList>
            <person name="Makarova K.S."/>
            <person name="Slesarev A."/>
            <person name="Wolf Y.I."/>
            <person name="Sorokin A."/>
            <person name="Mirkin B."/>
            <person name="Koonin E.V."/>
            <person name="Pavlov A."/>
            <person name="Pavlova N."/>
            <person name="Karamychev V."/>
            <person name="Polouchine N."/>
            <person name="Shakhova V."/>
            <person name="Grigoriev I."/>
            <person name="Lou Y."/>
            <person name="Rohksar D."/>
            <person name="Lucas S."/>
            <person name="Huang K."/>
            <person name="Goodstein D.M."/>
            <person name="Hawkins T."/>
            <person name="Plengvidhya V."/>
            <person name="Welker D."/>
            <person name="Hughes J."/>
            <person name="Goh Y."/>
            <person name="Benson A."/>
            <person name="Baldwin K."/>
            <person name="Lee J.-H."/>
            <person name="Diaz-Muniz I."/>
            <person name="Dosti B."/>
            <person name="Smeianov V."/>
            <person name="Wechter W."/>
            <person name="Barabote R."/>
            <person name="Lorca G."/>
            <person name="Altermann E."/>
            <person name="Barrangou R."/>
            <person name="Ganesan B."/>
            <person name="Xie Y."/>
            <person name="Rawsthorne H."/>
            <person name="Tamir D."/>
            <person name="Parker C."/>
            <person name="Breidt F."/>
            <person name="Broadbent J.R."/>
            <person name="Hutkins R."/>
            <person name="O'Sullivan D."/>
            <person name="Steele J."/>
            <person name="Unlu G."/>
            <person name="Saier M.H. Jr."/>
            <person name="Klaenhammer T."/>
            <person name="Richardson P."/>
            <person name="Kozyavkin S."/>
            <person name="Weimer B.C."/>
            <person name="Mills D.A."/>
        </authorList>
    </citation>
    <scope>NUCLEOTIDE SEQUENCE [LARGE SCALE GENOMIC DNA]</scope>
    <source>
        <strain>ATCC 25745 / CCUG 21536 / LMG 10740 / 183-1w</strain>
    </source>
</reference>
<name>TSAD_PEDPA</name>
<comment type="function">
    <text evidence="1">Required for the formation of a threonylcarbamoyl group on adenosine at position 37 (t(6)A37) in tRNAs that read codons beginning with adenine. Is involved in the transfer of the threonylcarbamoyl moiety of threonylcarbamoyl-AMP (TC-AMP) to the N6 group of A37, together with TsaE and TsaB. TsaD likely plays a direct catalytic role in this reaction.</text>
</comment>
<comment type="catalytic activity">
    <reaction evidence="1">
        <text>L-threonylcarbamoyladenylate + adenosine(37) in tRNA = N(6)-L-threonylcarbamoyladenosine(37) in tRNA + AMP + H(+)</text>
        <dbReference type="Rhea" id="RHEA:37059"/>
        <dbReference type="Rhea" id="RHEA-COMP:10162"/>
        <dbReference type="Rhea" id="RHEA-COMP:10163"/>
        <dbReference type="ChEBI" id="CHEBI:15378"/>
        <dbReference type="ChEBI" id="CHEBI:73682"/>
        <dbReference type="ChEBI" id="CHEBI:74411"/>
        <dbReference type="ChEBI" id="CHEBI:74418"/>
        <dbReference type="ChEBI" id="CHEBI:456215"/>
        <dbReference type="EC" id="2.3.1.234"/>
    </reaction>
</comment>
<comment type="cofactor">
    <cofactor evidence="1">
        <name>Fe(2+)</name>
        <dbReference type="ChEBI" id="CHEBI:29033"/>
    </cofactor>
    <text evidence="1">Binds 1 Fe(2+) ion per subunit.</text>
</comment>
<comment type="subcellular location">
    <subcellularLocation>
        <location evidence="1">Cytoplasm</location>
    </subcellularLocation>
</comment>
<comment type="similarity">
    <text evidence="1">Belongs to the KAE1 / TsaD family.</text>
</comment>
<gene>
    <name evidence="1" type="primary">tsaD</name>
    <name type="synonym">gcp</name>
    <name type="ordered locus">PEPE_1472</name>
</gene>
<proteinExistence type="inferred from homology"/>
<protein>
    <recommendedName>
        <fullName evidence="1">tRNA N6-adenosine threonylcarbamoyltransferase</fullName>
        <ecNumber evidence="1">2.3.1.234</ecNumber>
    </recommendedName>
    <alternativeName>
        <fullName evidence="1">N6-L-threonylcarbamoyladenine synthase</fullName>
        <shortName evidence="1">t(6)A synthase</shortName>
    </alternativeName>
    <alternativeName>
        <fullName evidence="1">t(6)A37 threonylcarbamoyladenosine biosynthesis protein TsaD</fullName>
    </alternativeName>
    <alternativeName>
        <fullName evidence="1">tRNA threonylcarbamoyladenosine biosynthesis protein TsaD</fullName>
    </alternativeName>
</protein>
<keyword id="KW-0012">Acyltransferase</keyword>
<keyword id="KW-0963">Cytoplasm</keyword>
<keyword id="KW-0408">Iron</keyword>
<keyword id="KW-0479">Metal-binding</keyword>
<keyword id="KW-0808">Transferase</keyword>
<keyword id="KW-0819">tRNA processing</keyword>